<sequence>MYNTVWSMDRDDADWREVMMPYSTELIFYIEMDPPALPPKPPKPMTSAVPNGMKDSSVSLQDAEWYWGDISREEVNDKLRDMPDGTFLVRDASTKMQGDYTLTLRKGGNNKLIKIYHRDGKYGFSDPLTFNSVVELINHYHHESLAQYNPKLDVKLMYPVSRYQQDQLVKEDNIDAVGKKLQEYHSQYQEKSKEYDRLYEEYTRTSQEIQMKRTAIEAFNETIKIFEEQCHTQEQHSKEYIERFRREGNEKEIERIMMNYDKLKSRLGEIHDSKMRLEQDLKNQALDNREIDKKMNSIKPDLIQLRKIRDQHLVWLNHKGVRQKRLNVWLGIKNEDADENYFINEEDENLPHYDEKTWFVEDINRVQAEDLLYGKPDGAFLIRESSKKGCYACSVVADGEVKHCVIYSTARGYGFAEPYNLYSSLKELVLHYQQTSLVQHNDSLNVRLAYPVHAQMPSLCR</sequence>
<reference key="1">
    <citation type="journal article" date="1998" name="Gene">
        <title>Cloning of human p55 gamma, a regulatory subunit of phosphatidylinositol 3-kinase, by a yeast two-hybrid library screen with the insulin-like growth factor-I receptor.</title>
        <authorList>
            <person name="Dey B.R."/>
            <person name="Furlanetto R.W."/>
            <person name="Nissley S.P."/>
        </authorList>
    </citation>
    <scope>NUCLEOTIDE SEQUENCE [MRNA] (ISOFORMS 1; 2 AND 3)</scope>
    <scope>VARIANT LYS-283</scope>
    <source>
        <tissue>Fetal brain</tissue>
    </source>
</reference>
<reference key="2">
    <citation type="submission" date="1996-10" db="EMBL/GenBank/DDBJ databases">
        <title>Molecular cloning of human p55pik.</title>
        <authorList>
            <person name="Suzuki T."/>
        </authorList>
    </citation>
    <scope>NUCLEOTIDE SEQUENCE [MRNA] (ISOFORM 1)</scope>
    <scope>VARIANT LYS-283</scope>
</reference>
<reference key="3">
    <citation type="journal article" date="2004" name="Nat. Genet.">
        <title>Complete sequencing and characterization of 21,243 full-length human cDNAs.</title>
        <authorList>
            <person name="Ota T."/>
            <person name="Suzuki Y."/>
            <person name="Nishikawa T."/>
            <person name="Otsuki T."/>
            <person name="Sugiyama T."/>
            <person name="Irie R."/>
            <person name="Wakamatsu A."/>
            <person name="Hayashi K."/>
            <person name="Sato H."/>
            <person name="Nagai K."/>
            <person name="Kimura K."/>
            <person name="Makita H."/>
            <person name="Sekine M."/>
            <person name="Obayashi M."/>
            <person name="Nishi T."/>
            <person name="Shibahara T."/>
            <person name="Tanaka T."/>
            <person name="Ishii S."/>
            <person name="Yamamoto J."/>
            <person name="Saito K."/>
            <person name="Kawai Y."/>
            <person name="Isono Y."/>
            <person name="Nakamura Y."/>
            <person name="Nagahari K."/>
            <person name="Murakami K."/>
            <person name="Yasuda T."/>
            <person name="Iwayanagi T."/>
            <person name="Wagatsuma M."/>
            <person name="Shiratori A."/>
            <person name="Sudo H."/>
            <person name="Hosoiri T."/>
            <person name="Kaku Y."/>
            <person name="Kodaira H."/>
            <person name="Kondo H."/>
            <person name="Sugawara M."/>
            <person name="Takahashi M."/>
            <person name="Kanda K."/>
            <person name="Yokoi T."/>
            <person name="Furuya T."/>
            <person name="Kikkawa E."/>
            <person name="Omura Y."/>
            <person name="Abe K."/>
            <person name="Kamihara K."/>
            <person name="Katsuta N."/>
            <person name="Sato K."/>
            <person name="Tanikawa M."/>
            <person name="Yamazaki M."/>
            <person name="Ninomiya K."/>
            <person name="Ishibashi T."/>
            <person name="Yamashita H."/>
            <person name="Murakawa K."/>
            <person name="Fujimori K."/>
            <person name="Tanai H."/>
            <person name="Kimata M."/>
            <person name="Watanabe M."/>
            <person name="Hiraoka S."/>
            <person name="Chiba Y."/>
            <person name="Ishida S."/>
            <person name="Ono Y."/>
            <person name="Takiguchi S."/>
            <person name="Watanabe S."/>
            <person name="Yosida M."/>
            <person name="Hotuta T."/>
            <person name="Kusano J."/>
            <person name="Kanehori K."/>
            <person name="Takahashi-Fujii A."/>
            <person name="Hara H."/>
            <person name="Tanase T.-O."/>
            <person name="Nomura Y."/>
            <person name="Togiya S."/>
            <person name="Komai F."/>
            <person name="Hara R."/>
            <person name="Takeuchi K."/>
            <person name="Arita M."/>
            <person name="Imose N."/>
            <person name="Musashino K."/>
            <person name="Yuuki H."/>
            <person name="Oshima A."/>
            <person name="Sasaki N."/>
            <person name="Aotsuka S."/>
            <person name="Yoshikawa Y."/>
            <person name="Matsunawa H."/>
            <person name="Ichihara T."/>
            <person name="Shiohata N."/>
            <person name="Sano S."/>
            <person name="Moriya S."/>
            <person name="Momiyama H."/>
            <person name="Satoh N."/>
            <person name="Takami S."/>
            <person name="Terashima Y."/>
            <person name="Suzuki O."/>
            <person name="Nakagawa S."/>
            <person name="Senoh A."/>
            <person name="Mizoguchi H."/>
            <person name="Goto Y."/>
            <person name="Shimizu F."/>
            <person name="Wakebe H."/>
            <person name="Hishigaki H."/>
            <person name="Watanabe T."/>
            <person name="Sugiyama A."/>
            <person name="Takemoto M."/>
            <person name="Kawakami B."/>
            <person name="Yamazaki M."/>
            <person name="Watanabe K."/>
            <person name="Kumagai A."/>
            <person name="Itakura S."/>
            <person name="Fukuzumi Y."/>
            <person name="Fujimori Y."/>
            <person name="Komiyama M."/>
            <person name="Tashiro H."/>
            <person name="Tanigami A."/>
            <person name="Fujiwara T."/>
            <person name="Ono T."/>
            <person name="Yamada K."/>
            <person name="Fujii Y."/>
            <person name="Ozaki K."/>
            <person name="Hirao M."/>
            <person name="Ohmori Y."/>
            <person name="Kawabata A."/>
            <person name="Hikiji T."/>
            <person name="Kobatake N."/>
            <person name="Inagaki H."/>
            <person name="Ikema Y."/>
            <person name="Okamoto S."/>
            <person name="Okitani R."/>
            <person name="Kawakami T."/>
            <person name="Noguchi S."/>
            <person name="Itoh T."/>
            <person name="Shigeta K."/>
            <person name="Senba T."/>
            <person name="Matsumura K."/>
            <person name="Nakajima Y."/>
            <person name="Mizuno T."/>
            <person name="Morinaga M."/>
            <person name="Sasaki M."/>
            <person name="Togashi T."/>
            <person name="Oyama M."/>
            <person name="Hata H."/>
            <person name="Watanabe M."/>
            <person name="Komatsu T."/>
            <person name="Mizushima-Sugano J."/>
            <person name="Satoh T."/>
            <person name="Shirai Y."/>
            <person name="Takahashi Y."/>
            <person name="Nakagawa K."/>
            <person name="Okumura K."/>
            <person name="Nagase T."/>
            <person name="Nomura N."/>
            <person name="Kikuchi H."/>
            <person name="Masuho Y."/>
            <person name="Yamashita R."/>
            <person name="Nakai K."/>
            <person name="Yada T."/>
            <person name="Nakamura Y."/>
            <person name="Ohara O."/>
            <person name="Isogai T."/>
            <person name="Sugano S."/>
        </authorList>
    </citation>
    <scope>NUCLEOTIDE SEQUENCE [LARGE SCALE MRNA] (ISOFORM 1)</scope>
    <scope>VARIANT LYS-283</scope>
    <source>
        <tissue>Brain</tissue>
    </source>
</reference>
<reference key="4">
    <citation type="journal article" date="2006" name="Nature">
        <title>The DNA sequence and biological annotation of human chromosome 1.</title>
        <authorList>
            <person name="Gregory S.G."/>
            <person name="Barlow K.F."/>
            <person name="McLay K.E."/>
            <person name="Kaul R."/>
            <person name="Swarbreck D."/>
            <person name="Dunham A."/>
            <person name="Scott C.E."/>
            <person name="Howe K.L."/>
            <person name="Woodfine K."/>
            <person name="Spencer C.C.A."/>
            <person name="Jones M.C."/>
            <person name="Gillson C."/>
            <person name="Searle S."/>
            <person name="Zhou Y."/>
            <person name="Kokocinski F."/>
            <person name="McDonald L."/>
            <person name="Evans R."/>
            <person name="Phillips K."/>
            <person name="Atkinson A."/>
            <person name="Cooper R."/>
            <person name="Jones C."/>
            <person name="Hall R.E."/>
            <person name="Andrews T.D."/>
            <person name="Lloyd C."/>
            <person name="Ainscough R."/>
            <person name="Almeida J.P."/>
            <person name="Ambrose K.D."/>
            <person name="Anderson F."/>
            <person name="Andrew R.W."/>
            <person name="Ashwell R.I.S."/>
            <person name="Aubin K."/>
            <person name="Babbage A.K."/>
            <person name="Bagguley C.L."/>
            <person name="Bailey J."/>
            <person name="Beasley H."/>
            <person name="Bethel G."/>
            <person name="Bird C.P."/>
            <person name="Bray-Allen S."/>
            <person name="Brown J.Y."/>
            <person name="Brown A.J."/>
            <person name="Buckley D."/>
            <person name="Burton J."/>
            <person name="Bye J."/>
            <person name="Carder C."/>
            <person name="Chapman J.C."/>
            <person name="Clark S.Y."/>
            <person name="Clarke G."/>
            <person name="Clee C."/>
            <person name="Cobley V."/>
            <person name="Collier R.E."/>
            <person name="Corby N."/>
            <person name="Coville G.J."/>
            <person name="Davies J."/>
            <person name="Deadman R."/>
            <person name="Dunn M."/>
            <person name="Earthrowl M."/>
            <person name="Ellington A.G."/>
            <person name="Errington H."/>
            <person name="Frankish A."/>
            <person name="Frankland J."/>
            <person name="French L."/>
            <person name="Garner P."/>
            <person name="Garnett J."/>
            <person name="Gay L."/>
            <person name="Ghori M.R.J."/>
            <person name="Gibson R."/>
            <person name="Gilby L.M."/>
            <person name="Gillett W."/>
            <person name="Glithero R.J."/>
            <person name="Grafham D.V."/>
            <person name="Griffiths C."/>
            <person name="Griffiths-Jones S."/>
            <person name="Grocock R."/>
            <person name="Hammond S."/>
            <person name="Harrison E.S.I."/>
            <person name="Hart E."/>
            <person name="Haugen E."/>
            <person name="Heath P.D."/>
            <person name="Holmes S."/>
            <person name="Holt K."/>
            <person name="Howden P.J."/>
            <person name="Hunt A.R."/>
            <person name="Hunt S.E."/>
            <person name="Hunter G."/>
            <person name="Isherwood J."/>
            <person name="James R."/>
            <person name="Johnson C."/>
            <person name="Johnson D."/>
            <person name="Joy A."/>
            <person name="Kay M."/>
            <person name="Kershaw J.K."/>
            <person name="Kibukawa M."/>
            <person name="Kimberley A.M."/>
            <person name="King A."/>
            <person name="Knights A.J."/>
            <person name="Lad H."/>
            <person name="Laird G."/>
            <person name="Lawlor S."/>
            <person name="Leongamornlert D.A."/>
            <person name="Lloyd D.M."/>
            <person name="Loveland J."/>
            <person name="Lovell J."/>
            <person name="Lush M.J."/>
            <person name="Lyne R."/>
            <person name="Martin S."/>
            <person name="Mashreghi-Mohammadi M."/>
            <person name="Matthews L."/>
            <person name="Matthews N.S.W."/>
            <person name="McLaren S."/>
            <person name="Milne S."/>
            <person name="Mistry S."/>
            <person name="Moore M.J.F."/>
            <person name="Nickerson T."/>
            <person name="O'Dell C.N."/>
            <person name="Oliver K."/>
            <person name="Palmeiri A."/>
            <person name="Palmer S.A."/>
            <person name="Parker A."/>
            <person name="Patel D."/>
            <person name="Pearce A.V."/>
            <person name="Peck A.I."/>
            <person name="Pelan S."/>
            <person name="Phelps K."/>
            <person name="Phillimore B.J."/>
            <person name="Plumb R."/>
            <person name="Rajan J."/>
            <person name="Raymond C."/>
            <person name="Rouse G."/>
            <person name="Saenphimmachak C."/>
            <person name="Sehra H.K."/>
            <person name="Sheridan E."/>
            <person name="Shownkeen R."/>
            <person name="Sims S."/>
            <person name="Skuce C.D."/>
            <person name="Smith M."/>
            <person name="Steward C."/>
            <person name="Subramanian S."/>
            <person name="Sycamore N."/>
            <person name="Tracey A."/>
            <person name="Tromans A."/>
            <person name="Van Helmond Z."/>
            <person name="Wall M."/>
            <person name="Wallis J.M."/>
            <person name="White S."/>
            <person name="Whitehead S.L."/>
            <person name="Wilkinson J.E."/>
            <person name="Willey D.L."/>
            <person name="Williams H."/>
            <person name="Wilming L."/>
            <person name="Wray P.W."/>
            <person name="Wu Z."/>
            <person name="Coulson A."/>
            <person name="Vaudin M."/>
            <person name="Sulston J.E."/>
            <person name="Durbin R.M."/>
            <person name="Hubbard T."/>
            <person name="Wooster R."/>
            <person name="Dunham I."/>
            <person name="Carter N.P."/>
            <person name="McVean G."/>
            <person name="Ross M.T."/>
            <person name="Harrow J."/>
            <person name="Olson M.V."/>
            <person name="Beck S."/>
            <person name="Rogers J."/>
            <person name="Bentley D.R."/>
        </authorList>
    </citation>
    <scope>NUCLEOTIDE SEQUENCE [LARGE SCALE GENOMIC DNA]</scope>
</reference>
<reference key="5">
    <citation type="submission" date="2005-09" db="EMBL/GenBank/DDBJ databases">
        <authorList>
            <person name="Mural R.J."/>
            <person name="Istrail S."/>
            <person name="Sutton G.G."/>
            <person name="Florea L."/>
            <person name="Halpern A.L."/>
            <person name="Mobarry C.M."/>
            <person name="Lippert R."/>
            <person name="Walenz B."/>
            <person name="Shatkay H."/>
            <person name="Dew I."/>
            <person name="Miller J.R."/>
            <person name="Flanigan M.J."/>
            <person name="Edwards N.J."/>
            <person name="Bolanos R."/>
            <person name="Fasulo D."/>
            <person name="Halldorsson B.V."/>
            <person name="Hannenhalli S."/>
            <person name="Turner R."/>
            <person name="Yooseph S."/>
            <person name="Lu F."/>
            <person name="Nusskern D.R."/>
            <person name="Shue B.C."/>
            <person name="Zheng X.H."/>
            <person name="Zhong F."/>
            <person name="Delcher A.L."/>
            <person name="Huson D.H."/>
            <person name="Kravitz S.A."/>
            <person name="Mouchard L."/>
            <person name="Reinert K."/>
            <person name="Remington K.A."/>
            <person name="Clark A.G."/>
            <person name="Waterman M.S."/>
            <person name="Eichler E.E."/>
            <person name="Adams M.D."/>
            <person name="Hunkapiller M.W."/>
            <person name="Myers E.W."/>
            <person name="Venter J.C."/>
        </authorList>
    </citation>
    <scope>NUCLEOTIDE SEQUENCE [LARGE SCALE GENOMIC DNA]</scope>
    <scope>VARIANT LYS-283</scope>
</reference>
<reference key="6">
    <citation type="journal article" date="2002" name="Biochem. Biophys. Res. Commun.">
        <title>Interaction of Axl receptor tyrosine kinase with C1-TEN, a novel C1 domain-containing protein with homology to tensin.</title>
        <authorList>
            <person name="Hafizi S."/>
            <person name="Alindri F."/>
            <person name="Karlsson R."/>
            <person name="Dahlbaeck B."/>
        </authorList>
    </citation>
    <scope>INTERACTION WITH AXL</scope>
</reference>
<organism>
    <name type="scientific">Homo sapiens</name>
    <name type="common">Human</name>
    <dbReference type="NCBI Taxonomy" id="9606"/>
    <lineage>
        <taxon>Eukaryota</taxon>
        <taxon>Metazoa</taxon>
        <taxon>Chordata</taxon>
        <taxon>Craniata</taxon>
        <taxon>Vertebrata</taxon>
        <taxon>Euteleostomi</taxon>
        <taxon>Mammalia</taxon>
        <taxon>Eutheria</taxon>
        <taxon>Euarchontoglires</taxon>
        <taxon>Primates</taxon>
        <taxon>Haplorrhini</taxon>
        <taxon>Catarrhini</taxon>
        <taxon>Hominidae</taxon>
        <taxon>Homo</taxon>
    </lineage>
</organism>
<protein>
    <recommendedName>
        <fullName>Phosphatidylinositol 3-kinase regulatory subunit gamma</fullName>
        <shortName>PI3-kinase regulatory subunit gamma</shortName>
        <shortName>PI3K regulatory subunit gamma</shortName>
        <shortName>PtdIns-3-kinase regulatory subunit gamma</shortName>
    </recommendedName>
    <alternativeName>
        <fullName>Phosphatidylinositol 3-kinase 55 kDa regulatory subunit gamma</fullName>
        <shortName>PI3-kinase subunit p55-gamma</shortName>
        <shortName>PtdIns-3-kinase regulatory subunit p55-gamma</shortName>
    </alternativeName>
    <alternativeName>
        <fullName>p55PIK</fullName>
    </alternativeName>
</protein>
<accession>Q92569</accession>
<accession>B2R9C1</accession>
<accession>D3DQ12</accession>
<accession>O60482</accession>
<accession>Q5T4P1</accession>
<accession>Q5T4P2</accession>
<proteinExistence type="evidence at protein level"/>
<gene>
    <name type="primary">PIK3R3</name>
</gene>
<evidence type="ECO:0000250" key="1">
    <source>
        <dbReference type="UniProtKB" id="Q64143"/>
    </source>
</evidence>
<evidence type="ECO:0000255" key="2">
    <source>
        <dbReference type="PROSITE-ProRule" id="PRU00191"/>
    </source>
</evidence>
<evidence type="ECO:0000269" key="3">
    <source>
    </source>
</evidence>
<evidence type="ECO:0000269" key="4">
    <source>
    </source>
</evidence>
<evidence type="ECO:0000269" key="5">
    <source>
    </source>
</evidence>
<evidence type="ECO:0000269" key="6">
    <source ref="2"/>
</evidence>
<evidence type="ECO:0000269" key="7">
    <source ref="5"/>
</evidence>
<evidence type="ECO:0000303" key="8">
    <source>
    </source>
</evidence>
<evidence type="ECO:0000305" key="9"/>
<keyword id="KW-0025">Alternative splicing</keyword>
<keyword id="KW-0597">Phosphoprotein</keyword>
<keyword id="KW-1267">Proteomics identification</keyword>
<keyword id="KW-1185">Reference proteome</keyword>
<keyword id="KW-0677">Repeat</keyword>
<keyword id="KW-0727">SH2 domain</keyword>
<comment type="function">
    <text>Binds to activated (phosphorylated) protein-tyrosine kinases through its SH2 domain and regulates their kinase activity. During insulin stimulation, it also binds to IRS-1.</text>
</comment>
<comment type="subunit">
    <text evidence="3">Heterodimer of a regulatory subunit PIK3R3 and a p110 catalytic subunit (PIK3CA, PIK3CB or PIK3CD). Interacts with AXL.</text>
</comment>
<comment type="interaction">
    <interactant intactId="EBI-79893">
        <id>Q92569</id>
    </interactant>
    <interactant intactId="EBI-375446">
        <id>Q8IZP0</id>
        <label>ABI1</label>
    </interactant>
    <organismsDiffer>false</organismsDiffer>
    <experiments>2</experiments>
</comment>
<comment type="interaction">
    <interactant intactId="EBI-79893">
        <id>Q92569</id>
    </interactant>
    <interactant intactId="EBI-713602">
        <id>Q9BQD7</id>
        <label>ANTKMT</label>
    </interactant>
    <organismsDiffer>false</organismsDiffer>
    <experiments>3</experiments>
</comment>
<comment type="interaction">
    <interactant intactId="EBI-79893">
        <id>Q92569</id>
    </interactant>
    <interactant intactId="EBI-608057">
        <id>P10275</id>
        <label>AR</label>
    </interactant>
    <organismsDiffer>false</organismsDiffer>
    <experiments>37</experiments>
</comment>
<comment type="interaction">
    <interactant intactId="EBI-79893">
        <id>Q92569</id>
    </interactant>
    <interactant intactId="EBI-11957452">
        <id>Q4LE39-3</id>
        <label>ARID4B</label>
    </interactant>
    <organismsDiffer>false</organismsDiffer>
    <experiments>3</experiments>
</comment>
<comment type="interaction">
    <interactant intactId="EBI-79893">
        <id>Q92569</id>
    </interactant>
    <interactant intactId="EBI-5280499">
        <id>Q66PJ3-4</id>
        <label>ARL6IP4</label>
    </interactant>
    <organismsDiffer>false</organismsDiffer>
    <experiments>3</experiments>
</comment>
<comment type="interaction">
    <interactant intactId="EBI-79893">
        <id>Q92569</id>
    </interactant>
    <interactant intactId="EBI-2105445">
        <id>P51451</id>
        <label>BLK</label>
    </interactant>
    <organismsDiffer>false</organismsDiffer>
    <experiments>3</experiments>
</comment>
<comment type="interaction">
    <interactant intactId="EBI-79893">
        <id>Q92569</id>
    </interactant>
    <interactant intactId="EBI-2548012">
        <id>Q9H2G9</id>
        <label>BLZF1</label>
    </interactant>
    <organismsDiffer>false</organismsDiffer>
    <experiments>5</experiments>
</comment>
<comment type="interaction">
    <interactant intactId="EBI-79893">
        <id>Q92569</id>
    </interactant>
    <interactant intactId="EBI-18036948">
        <id>Q3SXR2</id>
        <label>C3orf36</label>
    </interactant>
    <organismsDiffer>false</organismsDiffer>
    <experiments>3</experiments>
</comment>
<comment type="interaction">
    <interactant intactId="EBI-79893">
        <id>Q92569</id>
    </interactant>
    <interactant intactId="EBI-518228">
        <id>P22681</id>
        <label>CBL</label>
    </interactant>
    <organismsDiffer>false</organismsDiffer>
    <experiments>4</experiments>
</comment>
<comment type="interaction">
    <interactant intactId="EBI-79893">
        <id>Q92569</id>
    </interactant>
    <interactant intactId="EBI-10181422">
        <id>A0A1B0GWI1</id>
        <label>CCDC196</label>
    </interactant>
    <organismsDiffer>false</organismsDiffer>
    <experiments>3</experiments>
</comment>
<comment type="interaction">
    <interactant intactId="EBI-79893">
        <id>Q92569</id>
    </interactant>
    <interactant intactId="EBI-12814117">
        <id>Q8N998</id>
        <label>CCDC89</label>
    </interactant>
    <organismsDiffer>false</organismsDiffer>
    <experiments>3</experiments>
</comment>
<comment type="interaction">
    <interactant intactId="EBI-79893">
        <id>Q92569</id>
    </interactant>
    <interactant intactId="EBI-741885">
        <id>Q96LK0</id>
        <label>CEP19</label>
    </interactant>
    <organismsDiffer>false</organismsDiffer>
    <experiments>4</experiments>
</comment>
<comment type="interaction">
    <interactant intactId="EBI-79893">
        <id>Q92569</id>
    </interactant>
    <interactant intactId="EBI-12593838">
        <id>Q6WN34-2</id>
        <label>CHRDL2</label>
    </interactant>
    <organismsDiffer>false</organismsDiffer>
    <experiments>3</experiments>
</comment>
<comment type="interaction">
    <interactant intactId="EBI-79893">
        <id>Q92569</id>
    </interactant>
    <interactant intactId="EBI-12160437">
        <id>A8MTA8-2</id>
        <label>CIMIP2B</label>
    </interactant>
    <organismsDiffer>false</organismsDiffer>
    <experiments>3</experiments>
</comment>
<comment type="interaction">
    <interactant intactId="EBI-79893">
        <id>Q92569</id>
    </interactant>
    <interactant intactId="EBI-886">
        <id>P46108</id>
        <label>CRK</label>
    </interactant>
    <organismsDiffer>false</organismsDiffer>
    <experiments>3</experiments>
</comment>
<comment type="interaction">
    <interactant intactId="EBI-79893">
        <id>Q92569</id>
    </interactant>
    <interactant intactId="EBI-750444">
        <id>P53672</id>
        <label>CRYBA2</label>
    </interactant>
    <organismsDiffer>false</organismsDiffer>
    <experiments>4</experiments>
</comment>
<comment type="interaction">
    <interactant intactId="EBI-79893">
        <id>Q92569</id>
    </interactant>
    <interactant intactId="EBI-11988027">
        <id>Q9NRI5-2</id>
        <label>DISC1</label>
    </interactant>
    <organismsDiffer>false</organismsDiffer>
    <experiments>3</experiments>
</comment>
<comment type="interaction">
    <interactant intactId="EBI-79893">
        <id>Q92569</id>
    </interactant>
    <interactant intactId="EBI-712941">
        <id>Q14919</id>
        <label>DRAP1</label>
    </interactant>
    <organismsDiffer>false</organismsDiffer>
    <experiments>4</experiments>
</comment>
<comment type="interaction">
    <interactant intactId="EBI-79893">
        <id>Q92569</id>
    </interactant>
    <interactant intactId="EBI-297353">
        <id>P00533</id>
        <label>EGFR</label>
    </interactant>
    <organismsDiffer>false</organismsDiffer>
    <experiments>7</experiments>
</comment>
<comment type="interaction">
    <interactant intactId="EBI-79893">
        <id>Q92569</id>
    </interactant>
    <interactant intactId="EBI-744099">
        <id>Q9H0I2</id>
        <label>ENKD1</label>
    </interactant>
    <organismsDiffer>false</organismsDiffer>
    <experiments>3</experiments>
</comment>
<comment type="interaction">
    <interactant intactId="EBI-79893">
        <id>Q92569</id>
    </interactant>
    <interactant intactId="EBI-641062">
        <id>P04626</id>
        <label>ERBB2</label>
    </interactant>
    <organismsDiffer>false</organismsDiffer>
    <experiments>10</experiments>
</comment>
<comment type="interaction">
    <interactant intactId="EBI-79893">
        <id>Q92569</id>
    </interactant>
    <interactant intactId="EBI-720706">
        <id>P21860</id>
        <label>ERBB3</label>
    </interactant>
    <organismsDiffer>false</organismsDiffer>
    <experiments>22</experiments>
</comment>
<comment type="interaction">
    <interactant intactId="EBI-79893">
        <id>Q92569</id>
    </interactant>
    <interactant intactId="EBI-12903902">
        <id>Q8TC99</id>
        <label>FNDC8</label>
    </interactant>
    <organismsDiffer>false</organismsDiffer>
    <experiments>3</experiments>
</comment>
<comment type="interaction">
    <interactant intactId="EBI-79893">
        <id>Q92569</id>
    </interactant>
    <interactant intactId="EBI-725515">
        <id>O43559</id>
        <label>FRS3</label>
    </interactant>
    <organismsDiffer>false</organismsDiffer>
    <experiments>3</experiments>
</comment>
<comment type="interaction">
    <interactant intactId="EBI-79893">
        <id>Q92569</id>
    </interactant>
    <interactant intactId="EBI-517684">
        <id>Q13480</id>
        <label>GAB1</label>
    </interactant>
    <organismsDiffer>false</organismsDiffer>
    <experiments>36</experiments>
</comment>
<comment type="interaction">
    <interactant intactId="EBI-79893">
        <id>Q92569</id>
    </interactant>
    <interactant intactId="EBI-401755">
        <id>P62993</id>
        <label>GRB2</label>
    </interactant>
    <organismsDiffer>false</organismsDiffer>
    <experiments>4</experiments>
</comment>
<comment type="interaction">
    <interactant intactId="EBI-79893">
        <id>Q92569</id>
    </interactant>
    <interactant intactId="EBI-9834454">
        <id>P08631-2</id>
        <label>HCK</label>
    </interactant>
    <organismsDiffer>false</organismsDiffer>
    <experiments>4</experiments>
</comment>
<comment type="interaction">
    <interactant intactId="EBI-79893">
        <id>Q92569</id>
    </interactant>
    <interactant intactId="EBI-466029">
        <id>P42858</id>
        <label>HTT</label>
    </interactant>
    <organismsDiffer>false</organismsDiffer>
    <experiments>18</experiments>
</comment>
<comment type="interaction">
    <interactant intactId="EBI-79893">
        <id>Q92569</id>
    </interactant>
    <interactant intactId="EBI-517592">
        <id>P35568</id>
        <label>IRS1</label>
    </interactant>
    <organismsDiffer>false</organismsDiffer>
    <experiments>4</experiments>
</comment>
<comment type="interaction">
    <interactant intactId="EBI-79893">
        <id>Q92569</id>
    </interactant>
    <interactant intactId="EBI-712105">
        <id>Q13352</id>
        <label>ITGB3BP</label>
    </interactant>
    <organismsDiffer>false</organismsDiffer>
    <experiments>3</experiments>
</comment>
<comment type="interaction">
    <interactant intactId="EBI-79893">
        <id>Q92569</id>
    </interactant>
    <interactant intactId="EBI-739493">
        <id>Q6ZU52</id>
        <label>KIAA0408</label>
    </interactant>
    <organismsDiffer>false</organismsDiffer>
    <experiments>3</experiments>
</comment>
<comment type="interaction">
    <interactant intactId="EBI-79893">
        <id>Q92569</id>
    </interactant>
    <interactant intactId="EBI-1379503">
        <id>P10721</id>
        <label>KIT</label>
    </interactant>
    <organismsDiffer>false</organismsDiffer>
    <experiments>31</experiments>
</comment>
<comment type="interaction">
    <interactant intactId="EBI-79893">
        <id>Q92569</id>
    </interactant>
    <interactant intactId="EBI-11985629">
        <id>Q96JM7-2</id>
        <label>L3MBTL3</label>
    </interactant>
    <organismsDiffer>false</organismsDiffer>
    <experiments>3</experiments>
</comment>
<comment type="interaction">
    <interactant intactId="EBI-79893">
        <id>Q92569</id>
    </interactant>
    <interactant intactId="EBI-2339312">
        <id>P28838</id>
        <label>LAP3</label>
    </interactant>
    <organismsDiffer>false</organismsDiffer>
    <experiments>3</experiments>
</comment>
<comment type="interaction">
    <interactant intactId="EBI-79893">
        <id>Q92569</id>
    </interactant>
    <interactant intactId="EBI-1039152">
        <id>P08581</id>
        <label>MET</label>
    </interactant>
    <organismsDiffer>false</organismsDiffer>
    <experiments>11</experiments>
</comment>
<comment type="interaction">
    <interactant intactId="EBI-79893">
        <id>Q92569</id>
    </interactant>
    <interactant intactId="EBI-8487781">
        <id>Q8N6F8</id>
        <label>METTL27</label>
    </interactant>
    <organismsDiffer>false</organismsDiffer>
    <experiments>3</experiments>
</comment>
<comment type="interaction">
    <interactant intactId="EBI-79893">
        <id>Q92569</id>
    </interactant>
    <interactant intactId="EBI-8641936">
        <id>Q15742</id>
        <label>NAB2</label>
    </interactant>
    <organismsDiffer>false</organismsDiffer>
    <experiments>3</experiments>
</comment>
<comment type="interaction">
    <interactant intactId="EBI-79893">
        <id>Q92569</id>
    </interactant>
    <interactant intactId="EBI-2880203">
        <id>O76041</id>
        <label>NEBL</label>
    </interactant>
    <organismsDiffer>false</organismsDiffer>
    <experiments>3</experiments>
</comment>
<comment type="interaction">
    <interactant intactId="EBI-79893">
        <id>Q92569</id>
    </interactant>
    <interactant intactId="EBI-11746523">
        <id>Q14511-2</id>
        <label>NEDD9</label>
    </interactant>
    <organismsDiffer>false</organismsDiffer>
    <experiments>3</experiments>
</comment>
<comment type="interaction">
    <interactant intactId="EBI-79893">
        <id>Q92569</id>
    </interactant>
    <interactant intactId="EBI-3867416">
        <id>Q8TAK6</id>
        <label>OLIG1</label>
    </interactant>
    <organismsDiffer>false</organismsDiffer>
    <experiments>2</experiments>
</comment>
<comment type="interaction">
    <interactant intactId="EBI-79893">
        <id>Q92569</id>
    </interactant>
    <interactant intactId="EBI-527784">
        <id>Q6GQQ9</id>
        <label>OTUD7B</label>
    </interactant>
    <organismsDiffer>false</organismsDiffer>
    <experiments>3</experiments>
</comment>
<comment type="interaction">
    <interactant intactId="EBI-79893">
        <id>Q92569</id>
    </interactant>
    <interactant intactId="EBI-10693102">
        <id>Q9NPB6-2</id>
        <label>PARD6A</label>
    </interactant>
    <organismsDiffer>false</organismsDiffer>
    <experiments>3</experiments>
</comment>
<comment type="interaction">
    <interactant intactId="EBI-79893">
        <id>Q92569</id>
    </interactant>
    <interactant intactId="EBI-10302990">
        <id>Q9BYU1</id>
        <label>PBX4</label>
    </interactant>
    <organismsDiffer>false</organismsDiffer>
    <experiments>3</experiments>
</comment>
<comment type="interaction">
    <interactant intactId="EBI-79893">
        <id>Q92569</id>
    </interactant>
    <interactant intactId="EBI-448457">
        <id>Q8N2H9</id>
        <label>PELI3</label>
    </interactant>
    <organismsDiffer>false</organismsDiffer>
    <experiments>3</experiments>
</comment>
<comment type="interaction">
    <interactant intactId="EBI-79893">
        <id>Q92569</id>
    </interactant>
    <interactant intactId="EBI-2116585">
        <id>P42336</id>
        <label>PIK3CA</label>
    </interactant>
    <organismsDiffer>false</organismsDiffer>
    <experiments>47</experiments>
</comment>
<comment type="interaction">
    <interactant intactId="EBI-79893">
        <id>Q92569</id>
    </interactant>
    <interactant intactId="EBI-2609540">
        <id>P42338</id>
        <label>PIK3CB</label>
    </interactant>
    <organismsDiffer>false</organismsDiffer>
    <experiments>5</experiments>
</comment>
<comment type="interaction">
    <interactant intactId="EBI-79893">
        <id>Q92569</id>
    </interactant>
    <interactant intactId="EBI-718309">
        <id>O00329</id>
        <label>PIK3CD</label>
    </interactant>
    <organismsDiffer>false</organismsDiffer>
    <experiments>6</experiments>
</comment>
<comment type="interaction">
    <interactant intactId="EBI-79893">
        <id>Q92569</id>
    </interactant>
    <interactant intactId="EBI-10323452">
        <id>Q9UL19</id>
        <label>PLAAT4</label>
    </interactant>
    <organismsDiffer>false</organismsDiffer>
    <experiments>3</experiments>
</comment>
<comment type="interaction">
    <interactant intactId="EBI-79893">
        <id>Q92569</id>
    </interactant>
    <interactant intactId="EBI-742388">
        <id>Q9H8W4</id>
        <label>PLEKHF2</label>
    </interactant>
    <organismsDiffer>false</organismsDiffer>
    <experiments>3</experiments>
</comment>
<comment type="interaction">
    <interactant intactId="EBI-79893">
        <id>Q92569</id>
    </interactant>
    <interactant intactId="EBI-26412802">
        <id>Q5SXH7-1</id>
        <label>PLEKHS1</label>
    </interactant>
    <organismsDiffer>false</organismsDiffer>
    <experiments>4</experiments>
</comment>
<comment type="interaction">
    <interactant intactId="EBI-79893">
        <id>Q92569</id>
    </interactant>
    <interactant intactId="EBI-10700351">
        <id>O60237-2</id>
        <label>PPP1R12B</label>
    </interactant>
    <organismsDiffer>false</organismsDiffer>
    <experiments>2</experiments>
</comment>
<comment type="interaction">
    <interactant intactId="EBI-79893">
        <id>Q92569</id>
    </interactant>
    <interactant intactId="EBI-2805516">
        <id>P31321</id>
        <label>PRKAR1B</label>
    </interactant>
    <organismsDiffer>false</organismsDiffer>
    <experiments>3</experiments>
</comment>
<comment type="interaction">
    <interactant intactId="EBI-79893">
        <id>Q92569</id>
    </interactant>
    <interactant intactId="EBI-10181089">
        <id>I6L996</id>
        <label>PTK2</label>
    </interactant>
    <organismsDiffer>false</organismsDiffer>
    <experiments>3</experiments>
</comment>
<comment type="interaction">
    <interactant intactId="EBI-79893">
        <id>Q92569</id>
    </interactant>
    <interactant intactId="EBI-702142">
        <id>Q05397</id>
        <label>PTK2</label>
    </interactant>
    <organismsDiffer>false</organismsDiffer>
    <experiments>3</experiments>
</comment>
<comment type="interaction">
    <interactant intactId="EBI-79893">
        <id>Q92569</id>
    </interactant>
    <interactant intactId="EBI-2856326">
        <id>Q96R05</id>
        <label>RBP7</label>
    </interactant>
    <organismsDiffer>false</organismsDiffer>
    <experiments>3</experiments>
</comment>
<comment type="interaction">
    <interactant intactId="EBI-79893">
        <id>Q92569</id>
    </interactant>
    <interactant intactId="EBI-6257312">
        <id>Q9BVN2</id>
        <label>RUSC1</label>
    </interactant>
    <organismsDiffer>false</organismsDiffer>
    <experiments>3</experiments>
</comment>
<comment type="interaction">
    <interactant intactId="EBI-79893">
        <id>Q92569</id>
    </interactant>
    <interactant intactId="EBI-2822051">
        <id>Q14140</id>
        <label>SERTAD2</label>
    </interactant>
    <organismsDiffer>false</organismsDiffer>
    <experiments>3</experiments>
</comment>
<comment type="interaction">
    <interactant intactId="EBI-79893">
        <id>Q92569</id>
    </interactant>
    <interactant intactId="EBI-490630">
        <id>Q9NP31</id>
        <label>SH2D2A</label>
    </interactant>
    <organismsDiffer>false</organismsDiffer>
    <experiments>4</experiments>
</comment>
<comment type="interaction">
    <interactant intactId="EBI-79893">
        <id>Q92569</id>
    </interactant>
    <interactant intactId="EBI-3942425">
        <id>Q8WXH5</id>
        <label>SOCS4</label>
    </interactant>
    <organismsDiffer>false</organismsDiffer>
    <experiments>3</experiments>
</comment>
<comment type="interaction">
    <interactant intactId="EBI-79893">
        <id>Q92569</id>
    </interactant>
    <interactant intactId="EBI-12849978">
        <id>Q96LK8</id>
        <label>SPATA32</label>
    </interactant>
    <organismsDiffer>false</organismsDiffer>
    <experiments>3</experiments>
</comment>
<comment type="interaction">
    <interactant intactId="EBI-79893">
        <id>Q92569</id>
    </interactant>
    <interactant intactId="EBI-10269322">
        <id>Q8NCR6</id>
        <label>SPMIP6</label>
    </interactant>
    <organismsDiffer>false</organismsDiffer>
    <experiments>3</experiments>
</comment>
<comment type="interaction">
    <interactant intactId="EBI-79893">
        <id>Q92569</id>
    </interactant>
    <interactant intactId="EBI-2323209">
        <id>Q99619</id>
        <label>SPSB2</label>
    </interactant>
    <organismsDiffer>false</organismsDiffer>
    <experiments>3</experiments>
</comment>
<comment type="interaction">
    <interactant intactId="EBI-79893">
        <id>Q92569</id>
    </interactant>
    <interactant intactId="EBI-621482">
        <id>P12931</id>
        <label>SRC</label>
    </interactant>
    <organismsDiffer>false</organismsDiffer>
    <experiments>3</experiments>
</comment>
<comment type="interaction">
    <interactant intactId="EBI-79893">
        <id>Q92569</id>
    </interactant>
    <interactant intactId="EBI-744719">
        <id>Q9BWG4</id>
        <label>SSBP4</label>
    </interactant>
    <organismsDiffer>false</organismsDiffer>
    <experiments>3</experiments>
</comment>
<comment type="interaction">
    <interactant intactId="EBI-79893">
        <id>Q92569</id>
    </interactant>
    <interactant intactId="EBI-1186119">
        <id>P51692</id>
        <label>STAT5B</label>
    </interactant>
    <organismsDiffer>false</organismsDiffer>
    <experiments>3</experiments>
</comment>
<comment type="interaction">
    <interactant intactId="EBI-79893">
        <id>Q92569</id>
    </interactant>
    <interactant intactId="EBI-745958">
        <id>Q5VWN6</id>
        <label>TASOR2</label>
    </interactant>
    <organismsDiffer>false</organismsDiffer>
    <experiments>5</experiments>
</comment>
<comment type="interaction">
    <interactant intactId="EBI-79893">
        <id>Q92569</id>
    </interactant>
    <interactant intactId="EBI-11994780">
        <id>Q07912-2</id>
        <label>TNK2</label>
    </interactant>
    <organismsDiffer>false</organismsDiffer>
    <experiments>3</experiments>
</comment>
<comment type="interaction">
    <interactant intactId="EBI-79893">
        <id>Q92569</id>
    </interactant>
    <interactant intactId="EBI-746692">
        <id>P19237</id>
        <label>TNNI1</label>
    </interactant>
    <organismsDiffer>false</organismsDiffer>
    <experiments>3</experiments>
</comment>
<comment type="interaction">
    <interactant intactId="EBI-79893">
        <id>Q92569</id>
    </interactant>
    <interactant intactId="EBI-366083">
        <id>P04637</id>
        <label>TP53</label>
    </interactant>
    <organismsDiffer>false</organismsDiffer>
    <experiments>5</experiments>
</comment>
<comment type="interaction">
    <interactant intactId="EBI-79893">
        <id>Q92569</id>
    </interactant>
    <interactant intactId="EBI-3914288">
        <id>O60636</id>
        <label>TSPAN2</label>
    </interactant>
    <organismsDiffer>false</organismsDiffer>
    <experiments>3</experiments>
</comment>
<comment type="interaction">
    <interactant intactId="EBI-79893">
        <id>Q92569</id>
    </interactant>
    <interactant intactId="EBI-1569256">
        <id>Q8IZQ1</id>
        <label>WDFY3</label>
    </interactant>
    <organismsDiffer>false</organismsDiffer>
    <experiments>2</experiments>
</comment>
<comment type="interaction">
    <interactant intactId="EBI-79893">
        <id>Q92569</id>
    </interactant>
    <interactant intactId="EBI-515331">
        <id>P07947</id>
        <label>YES1</label>
    </interactant>
    <organismsDiffer>false</organismsDiffer>
    <experiments>3</experiments>
</comment>
<comment type="interaction">
    <interactant intactId="EBI-79893">
        <id>Q92569</id>
    </interactant>
    <interactant intactId="EBI-3232046">
        <id>Q99592</id>
        <label>ZBTB18</label>
    </interactant>
    <organismsDiffer>false</organismsDiffer>
    <experiments>3</experiments>
</comment>
<comment type="interaction">
    <interactant intactId="EBI-79893">
        <id>Q92569</id>
    </interactant>
    <interactant intactId="EBI-4395669">
        <id>Q6ZNG0</id>
        <label>ZNF620</label>
    </interactant>
    <organismsDiffer>false</organismsDiffer>
    <experiments>3</experiments>
</comment>
<comment type="alternative products">
    <event type="alternative splicing"/>
    <isoform>
        <id>Q92569-1</id>
        <name>1</name>
        <sequence type="displayed"/>
    </isoform>
    <isoform>
        <id>Q92569-2</id>
        <name>2</name>
        <sequence type="described" ref="VSP_004714"/>
    </isoform>
    <isoform>
        <id>Q92569-3</id>
        <name>3</name>
        <sequence type="described" ref="VSP_004713 VSP_004714"/>
    </isoform>
</comment>
<comment type="tissue specificity">
    <text>Highest levels in brain and testis. Lower levels in adipose tissue, kidney, heart, lung and skeletal muscle.</text>
</comment>
<comment type="similarity">
    <text evidence="9">Belongs to the PI3K p85 subunit family.</text>
</comment>
<feature type="chain" id="PRO_0000080767" description="Phosphatidylinositol 3-kinase regulatory subunit gamma">
    <location>
        <begin position="1"/>
        <end position="461"/>
    </location>
</feature>
<feature type="domain" description="SH2 1" evidence="2">
    <location>
        <begin position="65"/>
        <end position="160"/>
    </location>
</feature>
<feature type="domain" description="SH2 2" evidence="2">
    <location>
        <begin position="358"/>
        <end position="452"/>
    </location>
</feature>
<feature type="modified residue" description="Phosphotyrosine" evidence="1">
    <location>
        <position position="341"/>
    </location>
</feature>
<feature type="splice variant" id="VSP_004713" description="In isoform 3." evidence="8">
    <location>
        <begin position="36"/>
        <end position="71"/>
    </location>
</feature>
<feature type="splice variant" id="VSP_004714" description="In isoform 2 and isoform 3." evidence="8">
    <location>
        <begin position="256"/>
        <end position="314"/>
    </location>
</feature>
<feature type="sequence variant" id="VAR_047153" description="In dbSNP:rs785467." evidence="4 5 6 7">
    <original>N</original>
    <variation>K</variation>
    <location>
        <position position="283"/>
    </location>
</feature>
<feature type="sequence conflict" description="In Ref. 1; AAC39696." evidence="9" ref="1">
    <original>P</original>
    <variation>L</variation>
    <location>
        <position position="21"/>
    </location>
</feature>
<dbReference type="EMBL" id="AF028785">
    <property type="protein sequence ID" value="AAC39696.1"/>
    <property type="molecule type" value="mRNA"/>
</dbReference>
<dbReference type="EMBL" id="D88532">
    <property type="protein sequence ID" value="BAA13636.1"/>
    <property type="molecule type" value="mRNA"/>
</dbReference>
<dbReference type="EMBL" id="AK313726">
    <property type="protein sequence ID" value="BAG36468.1"/>
    <property type="molecule type" value="mRNA"/>
</dbReference>
<dbReference type="EMBL" id="AL358075">
    <property type="status" value="NOT_ANNOTATED_CDS"/>
    <property type="molecule type" value="Genomic_DNA"/>
</dbReference>
<dbReference type="EMBL" id="CH471059">
    <property type="protein sequence ID" value="EAX06946.1"/>
    <property type="molecule type" value="Genomic_DNA"/>
</dbReference>
<dbReference type="EMBL" id="CH471059">
    <property type="protein sequence ID" value="EAX06947.1"/>
    <property type="molecule type" value="Genomic_DNA"/>
</dbReference>
<dbReference type="EMBL" id="CH471059">
    <property type="protein sequence ID" value="EAX06944.1"/>
    <property type="molecule type" value="Genomic_DNA"/>
</dbReference>
<dbReference type="EMBL" id="CH471059">
    <property type="protein sequence ID" value="EAX06945.1"/>
    <property type="molecule type" value="Genomic_DNA"/>
</dbReference>
<dbReference type="CCDS" id="CCDS529.1">
    <molecule id="Q92569-1"/>
</dbReference>
<dbReference type="CCDS" id="CCDS76154.1">
    <molecule id="Q92569-2"/>
</dbReference>
<dbReference type="RefSeq" id="NP_001107644.1">
    <molecule id="Q92569-1"/>
    <property type="nucleotide sequence ID" value="NM_001114172.1"/>
</dbReference>
<dbReference type="RefSeq" id="NP_001290358.1">
    <molecule id="Q92569-2"/>
    <property type="nucleotide sequence ID" value="NM_001303429.2"/>
</dbReference>
<dbReference type="RefSeq" id="NP_003620.3">
    <molecule id="Q92569-1"/>
    <property type="nucleotide sequence ID" value="NM_003629.3"/>
</dbReference>
<dbReference type="RefSeq" id="XP_016858103.1">
    <property type="nucleotide sequence ID" value="XM_017002614.1"/>
</dbReference>
<dbReference type="SMR" id="Q92569"/>
<dbReference type="BioGRID" id="114075">
    <property type="interactions" value="200"/>
</dbReference>
<dbReference type="ComplexPortal" id="CPX-1918">
    <property type="entry name" value="Phosphatidylinositol 3-kinase complex class IA, p110alpha/p55gamma"/>
</dbReference>
<dbReference type="ComplexPortal" id="CPX-5977">
    <property type="entry name" value="Phosphatidylinositol 3-kinase complex class IA, p110beta/p55gamma"/>
</dbReference>
<dbReference type="ComplexPortal" id="CPX-5978">
    <property type="entry name" value="Phosphatidylinositol 3-kinase complex class IA, p110delta/p55gamma"/>
</dbReference>
<dbReference type="DIP" id="DIP-30925N"/>
<dbReference type="FunCoup" id="Q92569">
    <property type="interactions" value="2675"/>
</dbReference>
<dbReference type="IntAct" id="Q92569">
    <property type="interactions" value="212"/>
</dbReference>
<dbReference type="MINT" id="Q92569"/>
<dbReference type="STRING" id="9606.ENSP00000262741"/>
<dbReference type="ChEMBL" id="CHEMBL3559703"/>
<dbReference type="DrugBank" id="DB05210">
    <property type="generic name" value="SF1126"/>
</dbReference>
<dbReference type="MoonDB" id="Q92569">
    <property type="type" value="Predicted"/>
</dbReference>
<dbReference type="GlyGen" id="Q92569">
    <property type="glycosylation" value="1 site, 1 O-linked glycan (1 site)"/>
</dbReference>
<dbReference type="iPTMnet" id="Q92569"/>
<dbReference type="PhosphoSitePlus" id="Q92569"/>
<dbReference type="BioMuta" id="PIK3R3"/>
<dbReference type="DMDM" id="317373310"/>
<dbReference type="jPOST" id="Q92569"/>
<dbReference type="MassIVE" id="Q92569"/>
<dbReference type="PaxDb" id="9606-ENSP00000262741"/>
<dbReference type="PeptideAtlas" id="Q92569"/>
<dbReference type="ProteomicsDB" id="75327">
    <molecule id="Q92569-1"/>
</dbReference>
<dbReference type="ProteomicsDB" id="75328">
    <molecule id="Q92569-2"/>
</dbReference>
<dbReference type="ProteomicsDB" id="75329">
    <molecule id="Q92569-3"/>
</dbReference>
<dbReference type="Pumba" id="Q92569"/>
<dbReference type="Antibodypedia" id="1490">
    <property type="antibodies" value="287 antibodies from 36 providers"/>
</dbReference>
<dbReference type="DNASU" id="8503"/>
<dbReference type="Ensembl" id="ENST00000262741.10">
    <molecule id="Q92569-1"/>
    <property type="protein sequence ID" value="ENSP00000262741.5"/>
    <property type="gene ID" value="ENSG00000117461.15"/>
</dbReference>
<dbReference type="Ensembl" id="ENST00000372006.5">
    <molecule id="Q92569-1"/>
    <property type="protein sequence ID" value="ENSP00000361075.1"/>
    <property type="gene ID" value="ENSG00000117461.15"/>
</dbReference>
<dbReference type="Ensembl" id="ENST00000420542.5">
    <molecule id="Q92569-1"/>
    <property type="protein sequence ID" value="ENSP00000412546.1"/>
    <property type="gene ID" value="ENSG00000117461.15"/>
</dbReference>
<dbReference type="Ensembl" id="ENST00000423209.5">
    <molecule id="Q92569-2"/>
    <property type="protein sequence ID" value="ENSP00000391431.1"/>
    <property type="gene ID" value="ENSG00000117461.15"/>
</dbReference>
<dbReference type="GeneID" id="8503"/>
<dbReference type="KEGG" id="hsa:8503"/>
<dbReference type="MANE-Select" id="ENST00000262741.10">
    <property type="protein sequence ID" value="ENSP00000262741.5"/>
    <property type="RefSeq nucleotide sequence ID" value="NM_003629.4"/>
    <property type="RefSeq protein sequence ID" value="NP_003620.3"/>
</dbReference>
<dbReference type="UCSC" id="uc001cpb.5">
    <molecule id="Q92569-1"/>
    <property type="organism name" value="human"/>
</dbReference>
<dbReference type="AGR" id="HGNC:8981"/>
<dbReference type="CTD" id="8503"/>
<dbReference type="DisGeNET" id="8503"/>
<dbReference type="GeneCards" id="PIK3R3"/>
<dbReference type="HGNC" id="HGNC:8981">
    <property type="gene designation" value="PIK3R3"/>
</dbReference>
<dbReference type="HPA" id="ENSG00000117461">
    <property type="expression patterns" value="Low tissue specificity"/>
</dbReference>
<dbReference type="MIM" id="606076">
    <property type="type" value="gene"/>
</dbReference>
<dbReference type="neXtProt" id="NX_Q92569"/>
<dbReference type="OpenTargets" id="ENSG00000117461"/>
<dbReference type="PharmGKB" id="PA33314"/>
<dbReference type="VEuPathDB" id="HostDB:ENSG00000117461"/>
<dbReference type="eggNOG" id="KOG4637">
    <property type="taxonomic scope" value="Eukaryota"/>
</dbReference>
<dbReference type="GeneTree" id="ENSGT00940000156259"/>
<dbReference type="HOGENOM" id="CLU_041839_0_0_1"/>
<dbReference type="InParanoid" id="Q92569"/>
<dbReference type="OMA" id="KICHING"/>
<dbReference type="OrthoDB" id="3175255at2759"/>
<dbReference type="PAN-GO" id="Q92569">
    <property type="GO annotations" value="5 GO annotations based on evolutionary models"/>
</dbReference>
<dbReference type="PhylomeDB" id="Q92569"/>
<dbReference type="TreeFam" id="TF102033"/>
<dbReference type="BioCyc" id="MetaCyc:ENSG00000117461-MONOMER"/>
<dbReference type="PathwayCommons" id="Q92569"/>
<dbReference type="Reactome" id="R-HSA-114604">
    <property type="pathway name" value="GPVI-mediated activation cascade"/>
</dbReference>
<dbReference type="Reactome" id="R-HSA-1257604">
    <property type="pathway name" value="PIP3 activates AKT signaling"/>
</dbReference>
<dbReference type="Reactome" id="R-HSA-1266695">
    <property type="pathway name" value="Interleukin-7 signaling"/>
</dbReference>
<dbReference type="Reactome" id="R-HSA-1433557">
    <property type="pathway name" value="Signaling by SCF-KIT"/>
</dbReference>
<dbReference type="Reactome" id="R-HSA-1660499">
    <property type="pathway name" value="Synthesis of PIPs at the plasma membrane"/>
</dbReference>
<dbReference type="Reactome" id="R-HSA-2219530">
    <property type="pathway name" value="Constitutive Signaling by Aberrant PI3K in Cancer"/>
</dbReference>
<dbReference type="Reactome" id="R-HSA-389357">
    <property type="pathway name" value="CD28 dependent PI3K/Akt signaling"/>
</dbReference>
<dbReference type="Reactome" id="R-HSA-416476">
    <property type="pathway name" value="G alpha (q) signalling events"/>
</dbReference>
<dbReference type="Reactome" id="R-HSA-512988">
    <property type="pathway name" value="Interleukin-3, Interleukin-5 and GM-CSF signaling"/>
</dbReference>
<dbReference type="Reactome" id="R-HSA-6811558">
    <property type="pathway name" value="PI5P, PP2A and IER3 Regulate PI3K/AKT Signaling"/>
</dbReference>
<dbReference type="Reactome" id="R-HSA-8853659">
    <property type="pathway name" value="RET signaling"/>
</dbReference>
<dbReference type="Reactome" id="R-HSA-9009391">
    <property type="pathway name" value="Extra-nuclear estrogen signaling"/>
</dbReference>
<dbReference type="Reactome" id="R-HSA-9013149">
    <property type="pathway name" value="RAC1 GTPase cycle"/>
</dbReference>
<dbReference type="Reactome" id="R-HSA-9013404">
    <property type="pathway name" value="RAC2 GTPase cycle"/>
</dbReference>
<dbReference type="Reactome" id="R-HSA-912526">
    <property type="pathway name" value="Interleukin receptor SHC signaling"/>
</dbReference>
<dbReference type="Reactome" id="R-HSA-912631">
    <property type="pathway name" value="Regulation of signaling by CBL"/>
</dbReference>
<dbReference type="Reactome" id="R-HSA-9670439">
    <property type="pathway name" value="Signaling by phosphorylated juxtamembrane, extracellular and kinase domain KIT mutants"/>
</dbReference>
<dbReference type="Reactome" id="R-HSA-9927354">
    <property type="pathway name" value="Co-stimulation by ICOS"/>
</dbReference>
<dbReference type="SignaLink" id="Q92569"/>
<dbReference type="SIGNOR" id="Q92569"/>
<dbReference type="BioGRID-ORCS" id="8503">
    <property type="hits" value="13 hits in 1163 CRISPR screens"/>
</dbReference>
<dbReference type="CD-CODE" id="8C2F96ED">
    <property type="entry name" value="Centrosome"/>
</dbReference>
<dbReference type="ChiTaRS" id="PIK3R3">
    <property type="organism name" value="human"/>
</dbReference>
<dbReference type="GeneWiki" id="PIK3R3"/>
<dbReference type="GenomeRNAi" id="8503"/>
<dbReference type="Pharos" id="Q92569">
    <property type="development level" value="Tbio"/>
</dbReference>
<dbReference type="PRO" id="PR:Q92569"/>
<dbReference type="Proteomes" id="UP000005640">
    <property type="component" value="Chromosome 1"/>
</dbReference>
<dbReference type="RNAct" id="Q92569">
    <property type="molecule type" value="protein"/>
</dbReference>
<dbReference type="Bgee" id="ENSG00000117461">
    <property type="expression patterns" value="Expressed in cerebellar vermis and 182 other cell types or tissues"/>
</dbReference>
<dbReference type="ExpressionAtlas" id="Q92569">
    <property type="expression patterns" value="baseline and differential"/>
</dbReference>
<dbReference type="GO" id="GO:0005829">
    <property type="term" value="C:cytosol"/>
    <property type="evidence" value="ECO:0000304"/>
    <property type="project" value="Reactome"/>
</dbReference>
<dbReference type="GO" id="GO:0005943">
    <property type="term" value="C:phosphatidylinositol 3-kinase complex, class IA"/>
    <property type="evidence" value="ECO:0000318"/>
    <property type="project" value="GO_Central"/>
</dbReference>
<dbReference type="GO" id="GO:0016303">
    <property type="term" value="F:1-phosphatidylinositol-3-kinase activity"/>
    <property type="evidence" value="ECO:0000304"/>
    <property type="project" value="ProtInc"/>
</dbReference>
<dbReference type="GO" id="GO:0046935">
    <property type="term" value="F:1-phosphatidylinositol-3-kinase regulator activity"/>
    <property type="evidence" value="ECO:0000318"/>
    <property type="project" value="GO_Central"/>
</dbReference>
<dbReference type="GO" id="GO:0001784">
    <property type="term" value="F:phosphotyrosine residue binding"/>
    <property type="evidence" value="ECO:0000353"/>
    <property type="project" value="CAFA"/>
</dbReference>
<dbReference type="GO" id="GO:0030183">
    <property type="term" value="P:B cell differentiation"/>
    <property type="evidence" value="ECO:0000303"/>
    <property type="project" value="ComplexPortal"/>
</dbReference>
<dbReference type="GO" id="GO:0002042">
    <property type="term" value="P:cell migration involved in sprouting angiogenesis"/>
    <property type="evidence" value="ECO:0000316"/>
    <property type="project" value="BHF-UCL"/>
</dbReference>
<dbReference type="GO" id="GO:0006955">
    <property type="term" value="P:immune response"/>
    <property type="evidence" value="ECO:0000303"/>
    <property type="project" value="ComplexPortal"/>
</dbReference>
<dbReference type="GO" id="GO:0008286">
    <property type="term" value="P:insulin receptor signaling pathway"/>
    <property type="evidence" value="ECO:0000318"/>
    <property type="project" value="GO_Central"/>
</dbReference>
<dbReference type="GO" id="GO:2000811">
    <property type="term" value="P:negative regulation of anoikis"/>
    <property type="evidence" value="ECO:0000303"/>
    <property type="project" value="ComplexPortal"/>
</dbReference>
<dbReference type="GO" id="GO:0043491">
    <property type="term" value="P:phosphatidylinositol 3-kinase/protein kinase B signal transduction"/>
    <property type="evidence" value="ECO:0000315"/>
    <property type="project" value="BHF-UCL"/>
</dbReference>
<dbReference type="GO" id="GO:0030335">
    <property type="term" value="P:positive regulation of cell migration"/>
    <property type="evidence" value="ECO:0000303"/>
    <property type="project" value="ARUK-UCL"/>
</dbReference>
<dbReference type="GO" id="GO:0010628">
    <property type="term" value="P:positive regulation of gene expression"/>
    <property type="evidence" value="ECO:0000315"/>
    <property type="project" value="BHF-UCL"/>
</dbReference>
<dbReference type="GO" id="GO:0030217">
    <property type="term" value="P:T cell differentiation"/>
    <property type="evidence" value="ECO:0000303"/>
    <property type="project" value="ComplexPortal"/>
</dbReference>
<dbReference type="CDD" id="cd09930">
    <property type="entry name" value="SH2_cSH2_p85_like"/>
    <property type="match status" value="1"/>
</dbReference>
<dbReference type="CDD" id="cd09942">
    <property type="entry name" value="SH2_nSH2_p85_like"/>
    <property type="match status" value="1"/>
</dbReference>
<dbReference type="FunFam" id="3.30.505.10:FF:000006">
    <property type="entry name" value="Phosphatidylinositol 3-kinase regulatory subunit alpha"/>
    <property type="match status" value="1"/>
</dbReference>
<dbReference type="FunFam" id="3.30.505.10:FF:000017">
    <property type="entry name" value="Phosphatidylinositol 3-kinase regulatory subunit gamma b"/>
    <property type="match status" value="1"/>
</dbReference>
<dbReference type="FunFam" id="1.10.287.1490:FF:000001">
    <property type="entry name" value="Putative phosphatidylinositol 3-kinase regulatory subunit alpha"/>
    <property type="match status" value="1"/>
</dbReference>
<dbReference type="Gene3D" id="1.10.287.1490">
    <property type="match status" value="1"/>
</dbReference>
<dbReference type="Gene3D" id="3.30.505.10">
    <property type="entry name" value="SH2 domain"/>
    <property type="match status" value="2"/>
</dbReference>
<dbReference type="InterPro" id="IPR032498">
    <property type="entry name" value="PI3K_P85_iSH2"/>
</dbReference>
<dbReference type="InterPro" id="IPR035020">
    <property type="entry name" value="PI3kinase_P85_cSH2"/>
</dbReference>
<dbReference type="InterPro" id="IPR035022">
    <property type="entry name" value="PI3kinase_P85_nSH2"/>
</dbReference>
<dbReference type="InterPro" id="IPR000980">
    <property type="entry name" value="SH2"/>
</dbReference>
<dbReference type="InterPro" id="IPR036860">
    <property type="entry name" value="SH2_dom_sf"/>
</dbReference>
<dbReference type="PANTHER" id="PTHR10155">
    <property type="entry name" value="PHOSPHATIDYLINOSITOL 3-KINASE REGULATORY SUBUNIT"/>
    <property type="match status" value="1"/>
</dbReference>
<dbReference type="PANTHER" id="PTHR10155:SF1">
    <property type="entry name" value="PHOSPHATIDYLINOSITOL 3-KINASE REGULATORY SUBUNIT BETA"/>
    <property type="match status" value="1"/>
</dbReference>
<dbReference type="Pfam" id="PF16454">
    <property type="entry name" value="PI3K_P85_iSH2"/>
    <property type="match status" value="1"/>
</dbReference>
<dbReference type="Pfam" id="PF00017">
    <property type="entry name" value="SH2"/>
    <property type="match status" value="2"/>
</dbReference>
<dbReference type="PRINTS" id="PR00678">
    <property type="entry name" value="PI3KINASEP85"/>
</dbReference>
<dbReference type="PRINTS" id="PR00401">
    <property type="entry name" value="SH2DOMAIN"/>
</dbReference>
<dbReference type="SMART" id="SM00252">
    <property type="entry name" value="SH2"/>
    <property type="match status" value="2"/>
</dbReference>
<dbReference type="SUPFAM" id="SSF55550">
    <property type="entry name" value="SH2 domain"/>
    <property type="match status" value="2"/>
</dbReference>
<dbReference type="PROSITE" id="PS50001">
    <property type="entry name" value="SH2"/>
    <property type="match status" value="2"/>
</dbReference>
<name>P55G_HUMAN</name>